<gene>
    <name evidence="1" type="primary">ala</name>
    <name type="ordered locus">AF_1665</name>
</gene>
<organism>
    <name type="scientific">Archaeoglobus fulgidus (strain ATCC 49558 / DSM 4304 / JCM 9628 / NBRC 100126 / VC-16)</name>
    <dbReference type="NCBI Taxonomy" id="224325"/>
    <lineage>
        <taxon>Archaea</taxon>
        <taxon>Methanobacteriati</taxon>
        <taxon>Methanobacteriota</taxon>
        <taxon>Archaeoglobi</taxon>
        <taxon>Archaeoglobales</taxon>
        <taxon>Archaeoglobaceae</taxon>
        <taxon>Archaeoglobus</taxon>
    </lineage>
</organism>
<evidence type="ECO:0000255" key="1">
    <source>
        <dbReference type="HAMAP-Rule" id="MF_00935"/>
    </source>
</evidence>
<evidence type="ECO:0000269" key="2">
    <source>
    </source>
</evidence>
<evidence type="ECO:0000269" key="3">
    <source>
    </source>
</evidence>
<evidence type="ECO:0000305" key="4">
    <source>
    </source>
</evidence>
<evidence type="ECO:0007829" key="5">
    <source>
        <dbReference type="PDB" id="1OMO"/>
    </source>
</evidence>
<evidence type="ECO:0007829" key="6">
    <source>
        <dbReference type="PDB" id="1VLL"/>
    </source>
</evidence>
<feature type="chain" id="PRO_0000421682" description="Alanine dehydrogenase">
    <location>
        <begin position="1"/>
        <end position="322"/>
    </location>
</feature>
<feature type="active site" description="Proton donor/acceptor" evidence="4">
    <location>
        <position position="65"/>
    </location>
</feature>
<feature type="binding site" evidence="1 2">
    <location>
        <position position="108"/>
    </location>
    <ligand>
        <name>NAD(+)</name>
        <dbReference type="ChEBI" id="CHEBI:57540"/>
    </ligand>
</feature>
<feature type="binding site" evidence="1 2">
    <location>
        <begin position="135"/>
        <end position="136"/>
    </location>
    <ligand>
        <name>NAD(+)</name>
        <dbReference type="ChEBI" id="CHEBI:57540"/>
    </ligand>
</feature>
<feature type="binding site" evidence="1 2">
    <location>
        <begin position="157"/>
        <end position="159"/>
    </location>
    <ligand>
        <name>NAD(+)</name>
        <dbReference type="ChEBI" id="CHEBI:57540"/>
    </ligand>
</feature>
<feature type="binding site" evidence="1 2">
    <location>
        <begin position="217"/>
        <end position="219"/>
    </location>
    <ligand>
        <name>NAD(+)</name>
        <dbReference type="ChEBI" id="CHEBI:57540"/>
    </ligand>
</feature>
<feature type="binding site" evidence="1 2">
    <location>
        <position position="223"/>
    </location>
    <ligand>
        <name>NAD(+)</name>
        <dbReference type="ChEBI" id="CHEBI:57540"/>
    </ligand>
</feature>
<feature type="binding site" evidence="1 2">
    <location>
        <position position="290"/>
    </location>
    <ligand>
        <name>NAD(+)</name>
        <dbReference type="ChEBI" id="CHEBI:57540"/>
    </ligand>
</feature>
<feature type="strand" evidence="5">
    <location>
        <begin position="3"/>
        <end position="6"/>
    </location>
</feature>
<feature type="helix" evidence="5">
    <location>
        <begin position="8"/>
        <end position="12"/>
    </location>
</feature>
<feature type="helix" evidence="5">
    <location>
        <begin position="17"/>
        <end position="32"/>
    </location>
</feature>
<feature type="strand" evidence="5">
    <location>
        <begin position="42"/>
        <end position="45"/>
    </location>
</feature>
<feature type="strand" evidence="5">
    <location>
        <begin position="50"/>
        <end position="58"/>
    </location>
</feature>
<feature type="strand" evidence="5">
    <location>
        <begin position="61"/>
        <end position="69"/>
    </location>
</feature>
<feature type="turn" evidence="5">
    <location>
        <begin position="71"/>
        <end position="73"/>
    </location>
</feature>
<feature type="helix" evidence="5">
    <location>
        <begin position="74"/>
        <end position="76"/>
    </location>
</feature>
<feature type="strand" evidence="5">
    <location>
        <begin position="83"/>
        <end position="88"/>
    </location>
</feature>
<feature type="turn" evidence="5">
    <location>
        <begin position="90"/>
        <end position="92"/>
    </location>
</feature>
<feature type="strand" evidence="5">
    <location>
        <begin position="95"/>
        <end position="100"/>
    </location>
</feature>
<feature type="helix" evidence="5">
    <location>
        <begin position="102"/>
        <end position="120"/>
    </location>
</feature>
<feature type="strand" evidence="5">
    <location>
        <begin position="127"/>
        <end position="131"/>
    </location>
</feature>
<feature type="helix" evidence="5">
    <location>
        <begin position="135"/>
        <end position="147"/>
    </location>
</feature>
<feature type="strand" evidence="5">
    <location>
        <begin position="152"/>
        <end position="156"/>
    </location>
</feature>
<feature type="helix" evidence="5">
    <location>
        <begin position="160"/>
        <end position="172"/>
    </location>
</feature>
<feature type="strand" evidence="5">
    <location>
        <begin position="177"/>
        <end position="179"/>
    </location>
</feature>
<feature type="helix" evidence="5">
    <location>
        <begin position="182"/>
        <end position="185"/>
    </location>
</feature>
<feature type="strand" evidence="5">
    <location>
        <begin position="187"/>
        <end position="193"/>
    </location>
</feature>
<feature type="helix" evidence="5">
    <location>
        <begin position="204"/>
        <end position="206"/>
    </location>
</feature>
<feature type="strand" evidence="5">
    <location>
        <begin position="212"/>
        <end position="215"/>
    </location>
</feature>
<feature type="helix" evidence="5">
    <location>
        <begin position="228"/>
        <end position="232"/>
    </location>
</feature>
<feature type="strand" evidence="5">
    <location>
        <begin position="234"/>
        <end position="239"/>
    </location>
</feature>
<feature type="helix" evidence="5">
    <location>
        <begin position="241"/>
        <end position="247"/>
    </location>
</feature>
<feature type="helix" evidence="5">
    <location>
        <begin position="251"/>
        <end position="255"/>
    </location>
</feature>
<feature type="helix" evidence="6">
    <location>
        <begin position="261"/>
        <end position="263"/>
    </location>
</feature>
<feature type="strand" evidence="5">
    <location>
        <begin position="264"/>
        <end position="267"/>
    </location>
</feature>
<feature type="helix" evidence="5">
    <location>
        <begin position="268"/>
        <end position="272"/>
    </location>
</feature>
<feature type="strand" evidence="5">
    <location>
        <begin position="285"/>
        <end position="289"/>
    </location>
</feature>
<feature type="helix" evidence="5">
    <location>
        <begin position="294"/>
        <end position="311"/>
    </location>
</feature>
<feature type="strand" evidence="5">
    <location>
        <begin position="314"/>
        <end position="317"/>
    </location>
</feature>
<keyword id="KW-0002">3D-structure</keyword>
<keyword id="KW-0903">Direct protein sequencing</keyword>
<keyword id="KW-0520">NAD</keyword>
<keyword id="KW-0547">Nucleotide-binding</keyword>
<keyword id="KW-0560">Oxidoreductase</keyword>
<keyword id="KW-1185">Reference proteome</keyword>
<reference key="1">
    <citation type="journal article" date="1997" name="Nature">
        <title>The complete genome sequence of the hyperthermophilic, sulphate-reducing archaeon Archaeoglobus fulgidus.</title>
        <authorList>
            <person name="Klenk H.-P."/>
            <person name="Clayton R.A."/>
            <person name="Tomb J.-F."/>
            <person name="White O."/>
            <person name="Nelson K.E."/>
            <person name="Ketchum K.A."/>
            <person name="Dodson R.J."/>
            <person name="Gwinn M.L."/>
            <person name="Hickey E.K."/>
            <person name="Peterson J.D."/>
            <person name="Richardson D.L."/>
            <person name="Kerlavage A.R."/>
            <person name="Graham D.E."/>
            <person name="Kyrpides N.C."/>
            <person name="Fleischmann R.D."/>
            <person name="Quackenbush J."/>
            <person name="Lee N.H."/>
            <person name="Sutton G.G."/>
            <person name="Gill S.R."/>
            <person name="Kirkness E.F."/>
            <person name="Dougherty B.A."/>
            <person name="McKenney K."/>
            <person name="Adams M.D."/>
            <person name="Loftus B.J."/>
            <person name="Peterson S.N."/>
            <person name="Reich C.I."/>
            <person name="McNeil L.K."/>
            <person name="Badger J.H."/>
            <person name="Glodek A."/>
            <person name="Zhou L."/>
            <person name="Overbeek R."/>
            <person name="Gocayne J.D."/>
            <person name="Weidman J.F."/>
            <person name="McDonald L.A."/>
            <person name="Utterback T.R."/>
            <person name="Cotton M.D."/>
            <person name="Spriggs T."/>
            <person name="Artiach P."/>
            <person name="Kaine B.P."/>
            <person name="Sykes S.M."/>
            <person name="Sadow P.W."/>
            <person name="D'Andrea K.P."/>
            <person name="Bowman C."/>
            <person name="Fujii C."/>
            <person name="Garland S.A."/>
            <person name="Mason T.M."/>
            <person name="Olsen G.J."/>
            <person name="Fraser C.M."/>
            <person name="Smith H.O."/>
            <person name="Woese C.R."/>
            <person name="Venter J.C."/>
        </authorList>
    </citation>
    <scope>NUCLEOTIDE SEQUENCE [LARGE SCALE GENOMIC DNA]</scope>
    <source>
        <strain>ATCC 49558 / DSM 4304 / JCM 9628 / NBRC 100126 / VC-16</strain>
    </source>
</reference>
<reference key="2">
    <citation type="journal article" date="2004" name="J. Bacteriol.">
        <title>A novel archaeal alanine dehydrogenase homologous to ornithine cyclodeaminase and mu-crystallin.</title>
        <authorList>
            <person name="Schroder I."/>
            <person name="Vadas A."/>
            <person name="Johnson E."/>
            <person name="Lim S."/>
            <person name="Monbouquette H.G."/>
        </authorList>
    </citation>
    <scope>PROTEIN SEQUENCE OF 1-14</scope>
    <scope>FUNCTION</scope>
    <scope>CATALYTIC ACTIVITY</scope>
    <scope>GENE NAME</scope>
    <scope>BIOPHYSICOCHEMICAL PROPERTIES</scope>
    <scope>SUBSTRATE SPECIFICITY</scope>
    <scope>SUBUNIT</scope>
    <source>
        <strain>ATCC 49558 / DSM 4304 / JCM 9628 / NBRC 100126 / VC-16</strain>
    </source>
</reference>
<reference key="3">
    <citation type="journal article" date="2004" name="J. Mol. Biol.">
        <title>Structure of alanine dehydrogenase from Archaeoglobus: active site analysis and relation to bacterial cyclodeaminases and mammalian mu crystallin.</title>
        <authorList>
            <person name="Gallagher D.T."/>
            <person name="Monbouquette H.G."/>
            <person name="Schroder I."/>
            <person name="Robinson H."/>
            <person name="Holden M.J."/>
            <person name="Smith N.N."/>
        </authorList>
    </citation>
    <scope>X-RAY CRYSTALLOGRAPHY (2.32 ANGSTROMS) IN COMPLEX WITH NAD</scope>
    <scope>SUBUNIT</scope>
    <scope>REACTION MECHANISM</scope>
    <scope>ACTIVE SITE</scope>
</reference>
<reference key="4">
    <citation type="submission" date="2011-07" db="PDB data bank">
        <title>Crystal structure of alanine dehydrogenase (AF1665) from Archaeoglobus fulgidus at 2.80 A resolution.</title>
        <authorList>
            <consortium name="Joint center for structural genomics (JCSG)"/>
        </authorList>
    </citation>
    <scope>X-RAY CRYSTALLOGRAPHY (2.80 ANGSTROMS)</scope>
    <source>
        <strain>ATCC 49558 / DSM 4304 / JCM 9628 / NBRC 100126 / VC-16</strain>
    </source>
</reference>
<proteinExistence type="evidence at protein level"/>
<accession>O28608</accession>
<dbReference type="EC" id="1.4.1.1" evidence="1"/>
<dbReference type="EMBL" id="AE000782">
    <property type="protein sequence ID" value="AAB89583.1"/>
    <property type="molecule type" value="Genomic_DNA"/>
</dbReference>
<dbReference type="PIR" id="H69457">
    <property type="entry name" value="H69457"/>
</dbReference>
<dbReference type="RefSeq" id="WP_010879161.1">
    <property type="nucleotide sequence ID" value="NC_000917.1"/>
</dbReference>
<dbReference type="PDB" id="1OMO">
    <property type="method" value="X-ray"/>
    <property type="resolution" value="2.32 A"/>
    <property type="chains" value="A/B=1-322"/>
</dbReference>
<dbReference type="PDB" id="1VLL">
    <property type="method" value="X-ray"/>
    <property type="resolution" value="2.80 A"/>
    <property type="chains" value="A/B=1-322"/>
</dbReference>
<dbReference type="PDBsum" id="1OMO"/>
<dbReference type="PDBsum" id="1VLL"/>
<dbReference type="SMR" id="O28608"/>
<dbReference type="STRING" id="224325.AF_1665"/>
<dbReference type="PaxDb" id="224325-AF_1665"/>
<dbReference type="EnsemblBacteria" id="AAB89583">
    <property type="protein sequence ID" value="AAB89583"/>
    <property type="gene ID" value="AF_1665"/>
</dbReference>
<dbReference type="GeneID" id="24795408"/>
<dbReference type="KEGG" id="afu:AF_1665"/>
<dbReference type="eggNOG" id="arCOG01035">
    <property type="taxonomic scope" value="Archaea"/>
</dbReference>
<dbReference type="HOGENOM" id="CLU_042088_3_1_2"/>
<dbReference type="OrthoDB" id="21421at2157"/>
<dbReference type="PhylomeDB" id="O28608"/>
<dbReference type="BRENDA" id="1.4.1.1">
    <property type="organism ID" value="414"/>
</dbReference>
<dbReference type="EvolutionaryTrace" id="O28608"/>
<dbReference type="Proteomes" id="UP000002199">
    <property type="component" value="Chromosome"/>
</dbReference>
<dbReference type="GO" id="GO:0005737">
    <property type="term" value="C:cytoplasm"/>
    <property type="evidence" value="ECO:0007669"/>
    <property type="project" value="TreeGrafter"/>
</dbReference>
<dbReference type="GO" id="GO:0000286">
    <property type="term" value="F:alanine dehydrogenase activity"/>
    <property type="evidence" value="ECO:0000314"/>
    <property type="project" value="UniProtKB"/>
</dbReference>
<dbReference type="GO" id="GO:0051287">
    <property type="term" value="F:NAD binding"/>
    <property type="evidence" value="ECO:0000314"/>
    <property type="project" value="UniProtKB"/>
</dbReference>
<dbReference type="GO" id="GO:0042803">
    <property type="term" value="F:protein homodimerization activity"/>
    <property type="evidence" value="ECO:0000314"/>
    <property type="project" value="UniProtKB"/>
</dbReference>
<dbReference type="GO" id="GO:0006522">
    <property type="term" value="P:alanine metabolic process"/>
    <property type="evidence" value="ECO:0000314"/>
    <property type="project" value="UniProtKB"/>
</dbReference>
<dbReference type="FunFam" id="3.30.1780.10:FF:000002">
    <property type="entry name" value="Ornithine cyclodeaminase"/>
    <property type="match status" value="1"/>
</dbReference>
<dbReference type="FunFam" id="3.40.50.720:FF:000311">
    <property type="entry name" value="Ornithine cyclodeaminase"/>
    <property type="match status" value="1"/>
</dbReference>
<dbReference type="Gene3D" id="3.40.50.720">
    <property type="entry name" value="NAD(P)-binding Rossmann-like Domain"/>
    <property type="match status" value="1"/>
</dbReference>
<dbReference type="Gene3D" id="3.30.1780.10">
    <property type="entry name" value="ornithine cyclodeaminase, domain 1"/>
    <property type="match status" value="1"/>
</dbReference>
<dbReference type="HAMAP" id="MF_00935">
    <property type="entry name" value="AlaDH_arch"/>
    <property type="match status" value="1"/>
</dbReference>
<dbReference type="InterPro" id="IPR012742">
    <property type="entry name" value="Ala_DH_archaeglobus"/>
</dbReference>
<dbReference type="InterPro" id="IPR028609">
    <property type="entry name" value="AlaDH_arch-typ"/>
</dbReference>
<dbReference type="InterPro" id="IPR036291">
    <property type="entry name" value="NAD(P)-bd_dom_sf"/>
</dbReference>
<dbReference type="InterPro" id="IPR003462">
    <property type="entry name" value="ODC_Mu_crystall"/>
</dbReference>
<dbReference type="InterPro" id="IPR023401">
    <property type="entry name" value="ODC_N"/>
</dbReference>
<dbReference type="NCBIfam" id="TIGR02371">
    <property type="entry name" value="ala_DH_arch"/>
    <property type="match status" value="1"/>
</dbReference>
<dbReference type="PANTHER" id="PTHR13812">
    <property type="entry name" value="KETIMINE REDUCTASE MU-CRYSTALLIN"/>
    <property type="match status" value="1"/>
</dbReference>
<dbReference type="PANTHER" id="PTHR13812:SF19">
    <property type="entry name" value="KETIMINE REDUCTASE MU-CRYSTALLIN"/>
    <property type="match status" value="1"/>
</dbReference>
<dbReference type="Pfam" id="PF02423">
    <property type="entry name" value="OCD_Mu_crystall"/>
    <property type="match status" value="1"/>
</dbReference>
<dbReference type="PIRSF" id="PIRSF001439">
    <property type="entry name" value="CryM"/>
    <property type="match status" value="1"/>
</dbReference>
<dbReference type="SUPFAM" id="SSF51735">
    <property type="entry name" value="NAD(P)-binding Rossmann-fold domains"/>
    <property type="match status" value="1"/>
</dbReference>
<sequence length="322" mass="34829">METLILTQEEVESLISMDEAMNAVEEAFRLYALGKAQMPPKVYLEFEKGDLRAMPAHLMGYAGLKWVNSHPGNPDKGLPTVMALMILNSPETGFPLAVMDATYTTSLRTGAAGGIAAKYLARKNSSVFGFIGCGTQAYFQLEALRRVFDIGEVKAYDVREKAAKKFVSYCEDRGISASVQPAEEASRCDVLVTTTPSRKPVVKAEWVEEGTHINAIGADGPGKQELDVEILKKAKIVVDDLEQAKHGGEINVAVSKGVIGVEDVHATIGEVIAGLKDGRESDEEITIFDSTGLAIQDVAVAKVVYENALSKNVGSKIKFFRI</sequence>
<name>ALADH_ARCFU</name>
<comment type="function">
    <text evidence="1 3">Catalyzes the NAD(+)-dependent oxidative deamination of L-alanine to pyruvate, and the reverse reaction, the reductive amination of pyruvate. Its physiological role is not known. Cannot use NADP(+) instead of NAD(+) as a cosubstrate. In the deamination direction, can also efficiently use L-2-aminobutyrate as substrate. In the reductive amination direction, also exhibits high activity with 2-oxobutyrate and oxaloacetate as substrate. In contrast to bacterial homologs, does not exhibit any ornithine cyclodeaminase activity.</text>
</comment>
<comment type="catalytic activity">
    <reaction evidence="1 3">
        <text>L-alanine + NAD(+) + H2O = pyruvate + NH4(+) + NADH + H(+)</text>
        <dbReference type="Rhea" id="RHEA:18405"/>
        <dbReference type="ChEBI" id="CHEBI:15361"/>
        <dbReference type="ChEBI" id="CHEBI:15377"/>
        <dbReference type="ChEBI" id="CHEBI:15378"/>
        <dbReference type="ChEBI" id="CHEBI:28938"/>
        <dbReference type="ChEBI" id="CHEBI:57540"/>
        <dbReference type="ChEBI" id="CHEBI:57945"/>
        <dbReference type="ChEBI" id="CHEBI:57972"/>
        <dbReference type="EC" id="1.4.1.1"/>
    </reaction>
</comment>
<comment type="biophysicochemical properties">
    <kinetics>
        <KM evidence="3">0.71 mM for L-alanine (at pH 8.5 and 82 degrees Celsius)</KM>
        <KM evidence="3">0.085 mM for L-2-aminobutyrate (at pH 8.5 and 82 degrees Celsius)</KM>
        <KM evidence="3">0.6 mM for NAD(+) (at pH 8.5 and 82 degrees Celsius)</KM>
        <KM evidence="3">0.16 mM for pyruvate (at pH 8.5 and 82 degrees Celsius)</KM>
        <KM evidence="3">0.48 mM for 2-oxobutyrate (at pH 8.5 and 82 degrees Celsius)</KM>
        <KM evidence="3">0.97 mM for oxaloacetate (at pH 8.5 and 82 degrees Celsius)</KM>
        <KM evidence="3">0.02 mM for NADH (at pH 8.5 and 82 degrees Celsius)</KM>
        <KM evidence="3">17.3 mM for NH4(+) (at pH 8.5 and 82 degrees Celsius)</KM>
        <text>kcat is 6.1 sec(-1) and 9.6 sec(-1) for the oxidative deamination of L-alanine and L-2-aminobutyrate, respectively (at pH 8.5 and 82 degrees Celsius). kcat is 118 sec(-1), 143 sec(-1) and 113 sec(-1) for the reductive amination of pyruvate, 2-oxobutyrate and oxaloacetate, respectively (at pH 8.5 and 82 degrees Celsius).</text>
    </kinetics>
    <phDependence>
        <text evidence="3">Optimum pH is about 7.0 for both the deamination and amination reactions.</text>
    </phDependence>
    <temperatureDependence>
        <text evidence="3">Optimum temperature is 82 degrees Celsius for the reductive amination of pyruvate. Retains 30% of its maximum activity at 25 degrees Celsius. Completely loses its activity when incubated at 90 degrees Celsius for 2 hours. The thermostability of the enzyme is increased by more than 10-fold by 1.5 M KCl to a half-life of 55 hours at 90 degrees Celsius.</text>
    </temperatureDependence>
</comment>
<comment type="subunit">
    <text evidence="2 3">Homodimer.</text>
</comment>
<comment type="similarity">
    <text evidence="1">Belongs to the ornithine cyclodeaminase/mu-crystallin family. Archaeal alanine dehydrogenase subfamily.</text>
</comment>
<protein>
    <recommendedName>
        <fullName evidence="1">Alanine dehydrogenase</fullName>
        <shortName evidence="1">AlaDH</shortName>
        <ecNumber evidence="1">1.4.1.1</ecNumber>
    </recommendedName>
</protein>